<name>LEU1_HALH5</name>
<sequence>MRKISVFDTTLRDGEQSAGVNLNFEEKMEIAKQLERLGVDIIEAGFPASSQGDFQSVKAIAETVKGSSVTGLARSVQKDIDAAWEALKSAEEPRIHLFIATSPIHMEHKLRMTPEQVIEKAVESVKYAASRFKHVQWSAEDASRSDFPFLAQIIEAVIQAGATVINLPDTVGYTTPQEIKRMFQYMKQNVPSIDKVSLSTHNHDDLGMAVANSLAAIQGGADQVECTINGIGERAGNASLEEIAVALNIRKDHYETETGLILKEIKRTSSLVSKLTGMVVPNNKAVVGANAFAHESGIHQDGVLKNKQTYEIITPEMVGVSSNSMVLGKHSGRHAFKTKVQELGFTGTDEQLNNIFKAFKDLADKKKEITEDDLFALMTEQTVGGETNHYELQTLQVNYGSNLTNTATITMKLPSGEVAEEAATGSGSVEAIYNTLERLLDAPVKLLDYRIQSITGGRDALADVYVQMDYQGVVSSGRGTAHDVLEASAKAYLNAVNRTINRKKYAEVYGSKVEV</sequence>
<reference key="1">
    <citation type="journal article" date="2000" name="Nucleic Acids Res.">
        <title>Complete genome sequence of the alkaliphilic bacterium Bacillus halodurans and genomic sequence comparison with Bacillus subtilis.</title>
        <authorList>
            <person name="Takami H."/>
            <person name="Nakasone K."/>
            <person name="Takaki Y."/>
            <person name="Maeno G."/>
            <person name="Sasaki R."/>
            <person name="Masui N."/>
            <person name="Fuji F."/>
            <person name="Hirama C."/>
            <person name="Nakamura Y."/>
            <person name="Ogasawara N."/>
            <person name="Kuhara S."/>
            <person name="Horikoshi K."/>
        </authorList>
    </citation>
    <scope>NUCLEOTIDE SEQUENCE [LARGE SCALE GENOMIC DNA]</scope>
    <source>
        <strain>ATCC BAA-125 / DSM 18197 / FERM 7344 / JCM 9153 / C-125</strain>
    </source>
</reference>
<accession>Q9K8E8</accession>
<gene>
    <name evidence="1" type="primary">leuA</name>
    <name type="ordered locus">BH3058</name>
</gene>
<evidence type="ECO:0000255" key="1">
    <source>
        <dbReference type="HAMAP-Rule" id="MF_01025"/>
    </source>
</evidence>
<protein>
    <recommendedName>
        <fullName evidence="1">2-isopropylmalate synthase</fullName>
        <ecNumber evidence="1">2.3.3.13</ecNumber>
    </recommendedName>
    <alternativeName>
        <fullName evidence="1">Alpha-IPM synthase</fullName>
    </alternativeName>
    <alternativeName>
        <fullName evidence="1">Alpha-isopropylmalate synthase</fullName>
    </alternativeName>
</protein>
<dbReference type="EC" id="2.3.3.13" evidence="1"/>
<dbReference type="EMBL" id="BA000004">
    <property type="protein sequence ID" value="BAB06777.1"/>
    <property type="molecule type" value="Genomic_DNA"/>
</dbReference>
<dbReference type="PIR" id="B84032">
    <property type="entry name" value="B84032"/>
</dbReference>
<dbReference type="RefSeq" id="WP_010899202.1">
    <property type="nucleotide sequence ID" value="NC_002570.2"/>
</dbReference>
<dbReference type="SMR" id="Q9K8E8"/>
<dbReference type="STRING" id="272558.gene:10728968"/>
<dbReference type="KEGG" id="bha:BH3058"/>
<dbReference type="eggNOG" id="COG0119">
    <property type="taxonomic scope" value="Bacteria"/>
</dbReference>
<dbReference type="HOGENOM" id="CLU_022158_0_1_9"/>
<dbReference type="OrthoDB" id="9804858at2"/>
<dbReference type="UniPathway" id="UPA00048">
    <property type="reaction ID" value="UER00070"/>
</dbReference>
<dbReference type="Proteomes" id="UP000001258">
    <property type="component" value="Chromosome"/>
</dbReference>
<dbReference type="GO" id="GO:0005737">
    <property type="term" value="C:cytoplasm"/>
    <property type="evidence" value="ECO:0007669"/>
    <property type="project" value="UniProtKB-SubCell"/>
</dbReference>
<dbReference type="GO" id="GO:0003852">
    <property type="term" value="F:2-isopropylmalate synthase activity"/>
    <property type="evidence" value="ECO:0007669"/>
    <property type="project" value="UniProtKB-UniRule"/>
</dbReference>
<dbReference type="GO" id="GO:0003985">
    <property type="term" value="F:acetyl-CoA C-acetyltransferase activity"/>
    <property type="evidence" value="ECO:0007669"/>
    <property type="project" value="UniProtKB-UniRule"/>
</dbReference>
<dbReference type="GO" id="GO:0030145">
    <property type="term" value="F:manganese ion binding"/>
    <property type="evidence" value="ECO:0007669"/>
    <property type="project" value="UniProtKB-UniRule"/>
</dbReference>
<dbReference type="GO" id="GO:0009098">
    <property type="term" value="P:L-leucine biosynthetic process"/>
    <property type="evidence" value="ECO:0007669"/>
    <property type="project" value="UniProtKB-UniRule"/>
</dbReference>
<dbReference type="CDD" id="cd07940">
    <property type="entry name" value="DRE_TIM_IPMS"/>
    <property type="match status" value="1"/>
</dbReference>
<dbReference type="FunFam" id="1.10.238.260:FF:000001">
    <property type="entry name" value="2-isopropylmalate synthase"/>
    <property type="match status" value="1"/>
</dbReference>
<dbReference type="FunFam" id="3.20.20.70:FF:000010">
    <property type="entry name" value="2-isopropylmalate synthase"/>
    <property type="match status" value="1"/>
</dbReference>
<dbReference type="FunFam" id="3.30.160.270:FF:000003">
    <property type="entry name" value="2-isopropylmalate synthase"/>
    <property type="match status" value="1"/>
</dbReference>
<dbReference type="Gene3D" id="1.10.238.260">
    <property type="match status" value="1"/>
</dbReference>
<dbReference type="Gene3D" id="3.30.160.270">
    <property type="match status" value="1"/>
</dbReference>
<dbReference type="Gene3D" id="3.20.20.70">
    <property type="entry name" value="Aldolase class I"/>
    <property type="match status" value="1"/>
</dbReference>
<dbReference type="HAMAP" id="MF_01025">
    <property type="entry name" value="LeuA_type1"/>
    <property type="match status" value="1"/>
</dbReference>
<dbReference type="InterPro" id="IPR050073">
    <property type="entry name" value="2-IPM_HCS-like"/>
</dbReference>
<dbReference type="InterPro" id="IPR013709">
    <property type="entry name" value="2-isopropylmalate_synth_dimer"/>
</dbReference>
<dbReference type="InterPro" id="IPR002034">
    <property type="entry name" value="AIPM/Hcit_synth_CS"/>
</dbReference>
<dbReference type="InterPro" id="IPR013785">
    <property type="entry name" value="Aldolase_TIM"/>
</dbReference>
<dbReference type="InterPro" id="IPR054691">
    <property type="entry name" value="LeuA/HCS_post-cat"/>
</dbReference>
<dbReference type="InterPro" id="IPR036230">
    <property type="entry name" value="LeuA_allosteric_dom_sf"/>
</dbReference>
<dbReference type="InterPro" id="IPR005671">
    <property type="entry name" value="LeuA_bact_synth"/>
</dbReference>
<dbReference type="InterPro" id="IPR000891">
    <property type="entry name" value="PYR_CT"/>
</dbReference>
<dbReference type="NCBIfam" id="TIGR00973">
    <property type="entry name" value="leuA_bact"/>
    <property type="match status" value="1"/>
</dbReference>
<dbReference type="NCBIfam" id="NF002085">
    <property type="entry name" value="PRK00915.1-2"/>
    <property type="match status" value="1"/>
</dbReference>
<dbReference type="NCBIfam" id="NF002086">
    <property type="entry name" value="PRK00915.1-3"/>
    <property type="match status" value="1"/>
</dbReference>
<dbReference type="NCBIfam" id="NF002088">
    <property type="entry name" value="PRK00915.1-5"/>
    <property type="match status" value="1"/>
</dbReference>
<dbReference type="PANTHER" id="PTHR10277:SF9">
    <property type="entry name" value="2-ISOPROPYLMALATE SYNTHASE 1, CHLOROPLASTIC-RELATED"/>
    <property type="match status" value="1"/>
</dbReference>
<dbReference type="PANTHER" id="PTHR10277">
    <property type="entry name" value="HOMOCITRATE SYNTHASE-RELATED"/>
    <property type="match status" value="1"/>
</dbReference>
<dbReference type="Pfam" id="PF22617">
    <property type="entry name" value="HCS_D2"/>
    <property type="match status" value="1"/>
</dbReference>
<dbReference type="Pfam" id="PF00682">
    <property type="entry name" value="HMGL-like"/>
    <property type="match status" value="1"/>
</dbReference>
<dbReference type="Pfam" id="PF08502">
    <property type="entry name" value="LeuA_dimer"/>
    <property type="match status" value="1"/>
</dbReference>
<dbReference type="SMART" id="SM00917">
    <property type="entry name" value="LeuA_dimer"/>
    <property type="match status" value="1"/>
</dbReference>
<dbReference type="SUPFAM" id="SSF110921">
    <property type="entry name" value="2-isopropylmalate synthase LeuA, allosteric (dimerisation) domain"/>
    <property type="match status" value="1"/>
</dbReference>
<dbReference type="SUPFAM" id="SSF51569">
    <property type="entry name" value="Aldolase"/>
    <property type="match status" value="1"/>
</dbReference>
<dbReference type="PROSITE" id="PS00815">
    <property type="entry name" value="AIPM_HOMOCIT_SYNTH_1"/>
    <property type="match status" value="1"/>
</dbReference>
<dbReference type="PROSITE" id="PS00816">
    <property type="entry name" value="AIPM_HOMOCIT_SYNTH_2"/>
    <property type="match status" value="1"/>
</dbReference>
<dbReference type="PROSITE" id="PS50991">
    <property type="entry name" value="PYR_CT"/>
    <property type="match status" value="1"/>
</dbReference>
<keyword id="KW-0028">Amino-acid biosynthesis</keyword>
<keyword id="KW-0100">Branched-chain amino acid biosynthesis</keyword>
<keyword id="KW-0963">Cytoplasm</keyword>
<keyword id="KW-0432">Leucine biosynthesis</keyword>
<keyword id="KW-0464">Manganese</keyword>
<keyword id="KW-0479">Metal-binding</keyword>
<keyword id="KW-1185">Reference proteome</keyword>
<keyword id="KW-0808">Transferase</keyword>
<feature type="chain" id="PRO_0000140330" description="2-isopropylmalate synthase">
    <location>
        <begin position="1"/>
        <end position="515"/>
    </location>
</feature>
<feature type="domain" description="Pyruvate carboxyltransferase" evidence="1">
    <location>
        <begin position="4"/>
        <end position="266"/>
    </location>
</feature>
<feature type="region of interest" description="Regulatory domain" evidence="1">
    <location>
        <begin position="391"/>
        <end position="515"/>
    </location>
</feature>
<feature type="binding site" evidence="1">
    <location>
        <position position="13"/>
    </location>
    <ligand>
        <name>Mn(2+)</name>
        <dbReference type="ChEBI" id="CHEBI:29035"/>
    </ligand>
</feature>
<feature type="binding site" evidence="1">
    <location>
        <position position="201"/>
    </location>
    <ligand>
        <name>Mn(2+)</name>
        <dbReference type="ChEBI" id="CHEBI:29035"/>
    </ligand>
</feature>
<feature type="binding site" evidence="1">
    <location>
        <position position="203"/>
    </location>
    <ligand>
        <name>Mn(2+)</name>
        <dbReference type="ChEBI" id="CHEBI:29035"/>
    </ligand>
</feature>
<feature type="binding site" evidence="1">
    <location>
        <position position="237"/>
    </location>
    <ligand>
        <name>Mn(2+)</name>
        <dbReference type="ChEBI" id="CHEBI:29035"/>
    </ligand>
</feature>
<comment type="function">
    <text evidence="1">Catalyzes the condensation of the acetyl group of acetyl-CoA with 3-methyl-2-oxobutanoate (2-ketoisovalerate) to form 3-carboxy-3-hydroxy-4-methylpentanoate (2-isopropylmalate).</text>
</comment>
<comment type="catalytic activity">
    <reaction evidence="1">
        <text>3-methyl-2-oxobutanoate + acetyl-CoA + H2O = (2S)-2-isopropylmalate + CoA + H(+)</text>
        <dbReference type="Rhea" id="RHEA:21524"/>
        <dbReference type="ChEBI" id="CHEBI:1178"/>
        <dbReference type="ChEBI" id="CHEBI:11851"/>
        <dbReference type="ChEBI" id="CHEBI:15377"/>
        <dbReference type="ChEBI" id="CHEBI:15378"/>
        <dbReference type="ChEBI" id="CHEBI:57287"/>
        <dbReference type="ChEBI" id="CHEBI:57288"/>
        <dbReference type="EC" id="2.3.3.13"/>
    </reaction>
</comment>
<comment type="cofactor">
    <cofactor evidence="1">
        <name>Mn(2+)</name>
        <dbReference type="ChEBI" id="CHEBI:29035"/>
    </cofactor>
</comment>
<comment type="pathway">
    <text evidence="1">Amino-acid biosynthesis; L-leucine biosynthesis; L-leucine from 3-methyl-2-oxobutanoate: step 1/4.</text>
</comment>
<comment type="subunit">
    <text evidence="1">Homodimer.</text>
</comment>
<comment type="subcellular location">
    <subcellularLocation>
        <location evidence="1">Cytoplasm</location>
    </subcellularLocation>
</comment>
<comment type="similarity">
    <text evidence="1">Belongs to the alpha-IPM synthase/homocitrate synthase family. LeuA type 1 subfamily.</text>
</comment>
<organism>
    <name type="scientific">Halalkalibacterium halodurans (strain ATCC BAA-125 / DSM 18197 / FERM 7344 / JCM 9153 / C-125)</name>
    <name type="common">Bacillus halodurans</name>
    <dbReference type="NCBI Taxonomy" id="272558"/>
    <lineage>
        <taxon>Bacteria</taxon>
        <taxon>Bacillati</taxon>
        <taxon>Bacillota</taxon>
        <taxon>Bacilli</taxon>
        <taxon>Bacillales</taxon>
        <taxon>Bacillaceae</taxon>
        <taxon>Halalkalibacterium (ex Joshi et al. 2022)</taxon>
    </lineage>
</organism>
<proteinExistence type="inferred from homology"/>